<feature type="chain" id="PRO_1000049908" description="Large ribosomal subunit protein eL31">
    <location>
        <begin position="1"/>
        <end position="92"/>
    </location>
</feature>
<organism>
    <name type="scientific">Haloquadratum walsbyi (strain DSM 16790 / HBSQ001)</name>
    <dbReference type="NCBI Taxonomy" id="362976"/>
    <lineage>
        <taxon>Archaea</taxon>
        <taxon>Methanobacteriati</taxon>
        <taxon>Methanobacteriota</taxon>
        <taxon>Stenosarchaea group</taxon>
        <taxon>Halobacteria</taxon>
        <taxon>Halobacteriales</taxon>
        <taxon>Haloferacaceae</taxon>
        <taxon>Haloquadratum</taxon>
    </lineage>
</organism>
<name>RL31_HALWD</name>
<reference key="1">
    <citation type="journal article" date="2006" name="BMC Genomics">
        <title>The genome of the square archaeon Haloquadratum walsbyi: life at the limits of water activity.</title>
        <authorList>
            <person name="Bolhuis H."/>
            <person name="Palm P."/>
            <person name="Wende A."/>
            <person name="Falb M."/>
            <person name="Rampp M."/>
            <person name="Rodriguez-Valera F."/>
            <person name="Pfeiffer F."/>
            <person name="Oesterhelt D."/>
        </authorList>
    </citation>
    <scope>NUCLEOTIDE SEQUENCE [LARGE SCALE GENOMIC DNA]</scope>
    <source>
        <strain>DSM 16790 / HBSQ001</strain>
    </source>
</reference>
<proteinExistence type="inferred from homology"/>
<protein>
    <recommendedName>
        <fullName evidence="1">Large ribosomal subunit protein eL31</fullName>
    </recommendedName>
    <alternativeName>
        <fullName evidence="2">50S ribosomal protein L31e</fullName>
    </alternativeName>
</protein>
<gene>
    <name evidence="1" type="primary">rpl31e</name>
    <name type="ordered locus">HQ_3423A</name>
</gene>
<keyword id="KW-1185">Reference proteome</keyword>
<keyword id="KW-0687">Ribonucleoprotein</keyword>
<keyword id="KW-0689">Ribosomal protein</keyword>
<comment type="similarity">
    <text evidence="1">Belongs to the eukaryotic ribosomal protein eL31 family.</text>
</comment>
<evidence type="ECO:0000255" key="1">
    <source>
        <dbReference type="HAMAP-Rule" id="MF_00410"/>
    </source>
</evidence>
<evidence type="ECO:0000305" key="2"/>
<accession>Q18EU7</accession>
<dbReference type="EMBL" id="AM180088">
    <property type="protein sequence ID" value="CAJ53520.1"/>
    <property type="molecule type" value="Genomic_DNA"/>
</dbReference>
<dbReference type="RefSeq" id="WP_011572617.1">
    <property type="nucleotide sequence ID" value="NC_008212.1"/>
</dbReference>
<dbReference type="SMR" id="Q18EU7"/>
<dbReference type="STRING" id="362976.HQ_3423A"/>
<dbReference type="GeneID" id="4194619"/>
<dbReference type="KEGG" id="hwa:HQ_3423A"/>
<dbReference type="eggNOG" id="arCOG04473">
    <property type="taxonomic scope" value="Archaea"/>
</dbReference>
<dbReference type="HOGENOM" id="CLU_112570_3_2_2"/>
<dbReference type="Proteomes" id="UP000001975">
    <property type="component" value="Chromosome"/>
</dbReference>
<dbReference type="GO" id="GO:0022625">
    <property type="term" value="C:cytosolic large ribosomal subunit"/>
    <property type="evidence" value="ECO:0007669"/>
    <property type="project" value="TreeGrafter"/>
</dbReference>
<dbReference type="GO" id="GO:0003735">
    <property type="term" value="F:structural constituent of ribosome"/>
    <property type="evidence" value="ECO:0007669"/>
    <property type="project" value="InterPro"/>
</dbReference>
<dbReference type="GO" id="GO:0002181">
    <property type="term" value="P:cytoplasmic translation"/>
    <property type="evidence" value="ECO:0007669"/>
    <property type="project" value="TreeGrafter"/>
</dbReference>
<dbReference type="CDD" id="cd00463">
    <property type="entry name" value="Ribosomal_L31e"/>
    <property type="match status" value="1"/>
</dbReference>
<dbReference type="Gene3D" id="3.10.440.10">
    <property type="match status" value="1"/>
</dbReference>
<dbReference type="HAMAP" id="MF_00410">
    <property type="entry name" value="Ribosomal_eL31"/>
    <property type="match status" value="1"/>
</dbReference>
<dbReference type="InterPro" id="IPR000054">
    <property type="entry name" value="Ribosomal_eL31"/>
</dbReference>
<dbReference type="InterPro" id="IPR020052">
    <property type="entry name" value="Ribosomal_eL31_CS"/>
</dbReference>
<dbReference type="InterPro" id="IPR023621">
    <property type="entry name" value="Ribosomal_eL31_dom_sf"/>
</dbReference>
<dbReference type="NCBIfam" id="NF002258">
    <property type="entry name" value="PRK01192.1-1"/>
    <property type="match status" value="1"/>
</dbReference>
<dbReference type="PANTHER" id="PTHR10956">
    <property type="entry name" value="60S RIBOSOMAL PROTEIN L31"/>
    <property type="match status" value="1"/>
</dbReference>
<dbReference type="PANTHER" id="PTHR10956:SF0">
    <property type="entry name" value="60S RIBOSOMAL PROTEIN L31"/>
    <property type="match status" value="1"/>
</dbReference>
<dbReference type="Pfam" id="PF01198">
    <property type="entry name" value="Ribosomal_L31e"/>
    <property type="match status" value="1"/>
</dbReference>
<dbReference type="SMART" id="SM01380">
    <property type="entry name" value="Ribosomal_L31e"/>
    <property type="match status" value="1"/>
</dbReference>
<dbReference type="SUPFAM" id="SSF54575">
    <property type="entry name" value="Ribosomal protein L31e"/>
    <property type="match status" value="1"/>
</dbReference>
<dbReference type="PROSITE" id="PS01144">
    <property type="entry name" value="RIBOSOMAL_L31E"/>
    <property type="match status" value="1"/>
</dbReference>
<sequence length="92" mass="10383">MSTSDFEERVVTVPLRDVSAVPTHERAGRAMTLIREHLAQHFRVDESDIRLDPSLNETVWARGSQNPPSKLRVRAARFDEDGESIVEAEPAE</sequence>